<accession>Q97SE6</accession>
<keyword id="KW-0067">ATP-binding</keyword>
<keyword id="KW-0436">Ligase</keyword>
<keyword id="KW-0547">Nucleotide-binding</keyword>
<keyword id="KW-0648">Protein biosynthesis</keyword>
<keyword id="KW-1185">Reference proteome</keyword>
<sequence length="488" mass="52060">MTFNNKTIEELHNLLVSKEISATELTQATLENIKSREEALNSFVTIAEEQALVQAKAIDEAGIDADNVLSGIPLAVKDNISTDGILTTAASKMLYNYEPIFDATAVANAKTKGMIVVGKTNMDEFAMGGSGETSHYGATKNAWNHSKVPGGSSSGSAAAVASGQVRLSLGSDTGGSIRQPAAFNGIVGLKPTYGTVSRFGLIAFGSSLDQIGPFAPTVKENALLLNAIASEDAKDSTSAPVRIADFTSKIGQDIKGMKIALPKEYLGEGIDPEVKETILNAAKHFEKLGAIVEEVSLPHSKYGVAVYYIIASSEASSNLQRFDGIRYGYRAEDATNLDEIYVNSRSQGFGEEVKRRIMLGTFSLSSGYYDAYYKKAGQVRTLIIQDFEKVFADYDLILGPTAPSVAYDLDSLNHDPVAMYLADLLTIPVNLAGLPGISIPAGFSQGLPVGLQLIGPKYSEETIYQAAAAFEATTDYHKQQPVIFGGDN</sequence>
<comment type="function">
    <text evidence="1">Allows the formation of correctly charged Gln-tRNA(Gln) through the transamidation of misacylated Glu-tRNA(Gln) in organisms which lack glutaminyl-tRNA synthetase. The reaction takes place in the presence of glutamine and ATP through an activated gamma-phospho-Glu-tRNA(Gln).</text>
</comment>
<comment type="catalytic activity">
    <reaction evidence="1">
        <text>L-glutamyl-tRNA(Gln) + L-glutamine + ATP + H2O = L-glutaminyl-tRNA(Gln) + L-glutamate + ADP + phosphate + H(+)</text>
        <dbReference type="Rhea" id="RHEA:17521"/>
        <dbReference type="Rhea" id="RHEA-COMP:9681"/>
        <dbReference type="Rhea" id="RHEA-COMP:9684"/>
        <dbReference type="ChEBI" id="CHEBI:15377"/>
        <dbReference type="ChEBI" id="CHEBI:15378"/>
        <dbReference type="ChEBI" id="CHEBI:29985"/>
        <dbReference type="ChEBI" id="CHEBI:30616"/>
        <dbReference type="ChEBI" id="CHEBI:43474"/>
        <dbReference type="ChEBI" id="CHEBI:58359"/>
        <dbReference type="ChEBI" id="CHEBI:78520"/>
        <dbReference type="ChEBI" id="CHEBI:78521"/>
        <dbReference type="ChEBI" id="CHEBI:456216"/>
        <dbReference type="EC" id="6.3.5.7"/>
    </reaction>
</comment>
<comment type="subunit">
    <text evidence="1">Heterotrimer of A, B and C subunits.</text>
</comment>
<comment type="interaction">
    <interactant intactId="EBI-2207039">
        <id>Q97SE6</id>
    </interactant>
    <interactant intactId="EBI-2207206">
        <id>Q97QS2</id>
        <label>eno</label>
    </interactant>
    <organismsDiffer>false</organismsDiffer>
    <experiments>2</experiments>
</comment>
<comment type="interaction">
    <interactant intactId="EBI-2207039">
        <id>Q97SE6</id>
    </interactant>
    <interactant intactId="EBI-2207053">
        <id>Q97SE5</id>
        <label>gatC</label>
    </interactant>
    <organismsDiffer>false</organismsDiffer>
    <experiments>2</experiments>
</comment>
<comment type="interaction">
    <interactant intactId="EBI-2207039">
        <id>Q97SE6</id>
    </interactant>
    <interactant intactId="EBI-2206949">
        <id>Q97NV3</id>
        <label>groES</label>
    </interactant>
    <organismsDiffer>false</organismsDiffer>
    <experiments>2</experiments>
</comment>
<comment type="interaction">
    <interactant intactId="EBI-2207039">
        <id>Q97SE6</id>
    </interactant>
    <interactant intactId="EBI-2207109">
        <id>P0CB75</id>
        <label>pyrF</label>
    </interactant>
    <organismsDiffer>false</organismsDiffer>
    <experiments>2</experiments>
</comment>
<comment type="interaction">
    <interactant intactId="EBI-2207039">
        <id>Q97SE6</id>
    </interactant>
    <interactant intactId="EBI-2207368">
        <id>Q97NX5</id>
        <label>scpA</label>
    </interactant>
    <organismsDiffer>false</organismsDiffer>
    <experiments>2</experiments>
</comment>
<comment type="similarity">
    <text evidence="1">Belongs to the amidase family. GatA subfamily.</text>
</comment>
<gene>
    <name evidence="1" type="primary">gatA</name>
    <name type="ordered locus">SP_0437</name>
</gene>
<name>GATA_STRPN</name>
<feature type="chain" id="PRO_0000105212" description="Glutamyl-tRNA(Gln) amidotransferase subunit A">
    <location>
        <begin position="1"/>
        <end position="488"/>
    </location>
</feature>
<feature type="active site" description="Charge relay system" evidence="1">
    <location>
        <position position="77"/>
    </location>
</feature>
<feature type="active site" description="Charge relay system" evidence="1">
    <location>
        <position position="152"/>
    </location>
</feature>
<feature type="active site" description="Acyl-ester intermediate" evidence="1">
    <location>
        <position position="176"/>
    </location>
</feature>
<dbReference type="EC" id="6.3.5.7" evidence="1"/>
<dbReference type="EMBL" id="AE005672">
    <property type="protein sequence ID" value="AAK74599.1"/>
    <property type="molecule type" value="Genomic_DNA"/>
</dbReference>
<dbReference type="PIR" id="F95050">
    <property type="entry name" value="F95050"/>
</dbReference>
<dbReference type="RefSeq" id="WP_000143747.1">
    <property type="nucleotide sequence ID" value="NZ_CP155539.1"/>
</dbReference>
<dbReference type="SMR" id="Q97SE6"/>
<dbReference type="IntAct" id="Q97SE6">
    <property type="interactions" value="5"/>
</dbReference>
<dbReference type="PaxDb" id="170187-SP_0437"/>
<dbReference type="EnsemblBacteria" id="AAK74599">
    <property type="protein sequence ID" value="AAK74599"/>
    <property type="gene ID" value="SP_0437"/>
</dbReference>
<dbReference type="KEGG" id="spn:SP_0437"/>
<dbReference type="eggNOG" id="COG0154">
    <property type="taxonomic scope" value="Bacteria"/>
</dbReference>
<dbReference type="PhylomeDB" id="Q97SE6"/>
<dbReference type="BioCyc" id="SPNE170187:G1FZB-452-MONOMER"/>
<dbReference type="Proteomes" id="UP000000585">
    <property type="component" value="Chromosome"/>
</dbReference>
<dbReference type="GO" id="GO:0030956">
    <property type="term" value="C:glutamyl-tRNA(Gln) amidotransferase complex"/>
    <property type="evidence" value="ECO:0007669"/>
    <property type="project" value="InterPro"/>
</dbReference>
<dbReference type="GO" id="GO:0005524">
    <property type="term" value="F:ATP binding"/>
    <property type="evidence" value="ECO:0007669"/>
    <property type="project" value="UniProtKB-KW"/>
</dbReference>
<dbReference type="GO" id="GO:0050567">
    <property type="term" value="F:glutaminyl-tRNA synthase (glutamine-hydrolyzing) activity"/>
    <property type="evidence" value="ECO:0007669"/>
    <property type="project" value="UniProtKB-UniRule"/>
</dbReference>
<dbReference type="GO" id="GO:0006412">
    <property type="term" value="P:translation"/>
    <property type="evidence" value="ECO:0007669"/>
    <property type="project" value="UniProtKB-UniRule"/>
</dbReference>
<dbReference type="Gene3D" id="3.90.1300.10">
    <property type="entry name" value="Amidase signature (AS) domain"/>
    <property type="match status" value="1"/>
</dbReference>
<dbReference type="HAMAP" id="MF_00120">
    <property type="entry name" value="GatA"/>
    <property type="match status" value="1"/>
</dbReference>
<dbReference type="InterPro" id="IPR000120">
    <property type="entry name" value="Amidase"/>
</dbReference>
<dbReference type="InterPro" id="IPR020556">
    <property type="entry name" value="Amidase_CS"/>
</dbReference>
<dbReference type="InterPro" id="IPR023631">
    <property type="entry name" value="Amidase_dom"/>
</dbReference>
<dbReference type="InterPro" id="IPR036928">
    <property type="entry name" value="AS_sf"/>
</dbReference>
<dbReference type="InterPro" id="IPR004412">
    <property type="entry name" value="GatA"/>
</dbReference>
<dbReference type="NCBIfam" id="TIGR00132">
    <property type="entry name" value="gatA"/>
    <property type="match status" value="1"/>
</dbReference>
<dbReference type="PANTHER" id="PTHR11895:SF151">
    <property type="entry name" value="GLUTAMYL-TRNA(GLN) AMIDOTRANSFERASE SUBUNIT A"/>
    <property type="match status" value="1"/>
</dbReference>
<dbReference type="PANTHER" id="PTHR11895">
    <property type="entry name" value="TRANSAMIDASE"/>
    <property type="match status" value="1"/>
</dbReference>
<dbReference type="Pfam" id="PF01425">
    <property type="entry name" value="Amidase"/>
    <property type="match status" value="1"/>
</dbReference>
<dbReference type="SUPFAM" id="SSF75304">
    <property type="entry name" value="Amidase signature (AS) enzymes"/>
    <property type="match status" value="1"/>
</dbReference>
<dbReference type="PROSITE" id="PS00571">
    <property type="entry name" value="AMIDASES"/>
    <property type="match status" value="1"/>
</dbReference>
<protein>
    <recommendedName>
        <fullName evidence="1">Glutamyl-tRNA(Gln) amidotransferase subunit A</fullName>
        <shortName evidence="1">Glu-ADT subunit A</shortName>
        <ecNumber evidence="1">6.3.5.7</ecNumber>
    </recommendedName>
</protein>
<organism>
    <name type="scientific">Streptococcus pneumoniae serotype 4 (strain ATCC BAA-334 / TIGR4)</name>
    <dbReference type="NCBI Taxonomy" id="170187"/>
    <lineage>
        <taxon>Bacteria</taxon>
        <taxon>Bacillati</taxon>
        <taxon>Bacillota</taxon>
        <taxon>Bacilli</taxon>
        <taxon>Lactobacillales</taxon>
        <taxon>Streptococcaceae</taxon>
        <taxon>Streptococcus</taxon>
    </lineage>
</organism>
<evidence type="ECO:0000255" key="1">
    <source>
        <dbReference type="HAMAP-Rule" id="MF_00120"/>
    </source>
</evidence>
<reference key="1">
    <citation type="journal article" date="2001" name="Science">
        <title>Complete genome sequence of a virulent isolate of Streptococcus pneumoniae.</title>
        <authorList>
            <person name="Tettelin H."/>
            <person name="Nelson K.E."/>
            <person name="Paulsen I.T."/>
            <person name="Eisen J.A."/>
            <person name="Read T.D."/>
            <person name="Peterson S.N."/>
            <person name="Heidelberg J.F."/>
            <person name="DeBoy R.T."/>
            <person name="Haft D.H."/>
            <person name="Dodson R.J."/>
            <person name="Durkin A.S."/>
            <person name="Gwinn M.L."/>
            <person name="Kolonay J.F."/>
            <person name="Nelson W.C."/>
            <person name="Peterson J.D."/>
            <person name="Umayam L.A."/>
            <person name="White O."/>
            <person name="Salzberg S.L."/>
            <person name="Lewis M.R."/>
            <person name="Radune D."/>
            <person name="Holtzapple E.K."/>
            <person name="Khouri H.M."/>
            <person name="Wolf A.M."/>
            <person name="Utterback T.R."/>
            <person name="Hansen C.L."/>
            <person name="McDonald L.A."/>
            <person name="Feldblyum T.V."/>
            <person name="Angiuoli S.V."/>
            <person name="Dickinson T."/>
            <person name="Hickey E.K."/>
            <person name="Holt I.E."/>
            <person name="Loftus B.J."/>
            <person name="Yang F."/>
            <person name="Smith H.O."/>
            <person name="Venter J.C."/>
            <person name="Dougherty B.A."/>
            <person name="Morrison D.A."/>
            <person name="Hollingshead S.K."/>
            <person name="Fraser C.M."/>
        </authorList>
    </citation>
    <scope>NUCLEOTIDE SEQUENCE [LARGE SCALE GENOMIC DNA]</scope>
    <source>
        <strain>ATCC BAA-334 / TIGR4</strain>
    </source>
</reference>
<proteinExistence type="evidence at protein level"/>